<reference key="1">
    <citation type="journal article" date="2000" name="DNA Res.">
        <title>Structural analysis of Arabidopsis thaliana chromosome 5. X. Sequence features of the regions of 3,076,755 bp covered by sixty P1 and TAC clones.</title>
        <authorList>
            <person name="Sato S."/>
            <person name="Nakamura Y."/>
            <person name="Kaneko T."/>
            <person name="Katoh T."/>
            <person name="Asamizu E."/>
            <person name="Kotani H."/>
            <person name="Tabata S."/>
        </authorList>
    </citation>
    <scope>NUCLEOTIDE SEQUENCE [LARGE SCALE GENOMIC DNA]</scope>
    <source>
        <strain>cv. Columbia</strain>
    </source>
</reference>
<reference key="2">
    <citation type="journal article" date="2017" name="Plant J.">
        <title>Araport11: a complete reannotation of the Arabidopsis thaliana reference genome.</title>
        <authorList>
            <person name="Cheng C.Y."/>
            <person name="Krishnakumar V."/>
            <person name="Chan A.P."/>
            <person name="Thibaud-Nissen F."/>
            <person name="Schobel S."/>
            <person name="Town C.D."/>
        </authorList>
    </citation>
    <scope>GENOME REANNOTATION</scope>
    <source>
        <strain>cv. Columbia</strain>
    </source>
</reference>
<reference key="3">
    <citation type="journal article" date="2015" name="Nat. Commun.">
        <title>Two linked pairs of Arabidopsis TNL resistance genes independently confer recognition of bacterial effector AvrRps4.</title>
        <authorList>
            <person name="Saucet S.B."/>
            <person name="Ma Y."/>
            <person name="Sarris P.F."/>
            <person name="Furzer O.J."/>
            <person name="Sohn K.H."/>
            <person name="Jones J.D."/>
        </authorList>
    </citation>
    <scope>FUNCTION</scope>
    <scope>INTERACTION WITH RRS1B</scope>
    <scope>SUBUNIT</scope>
    <scope>DOMAIN</scope>
</reference>
<name>RPS4B_ARATH</name>
<gene>
    <name evidence="4" type="primary">RPS4B</name>
    <name evidence="6" type="ordered locus">At5g45060</name>
    <name evidence="7" type="ORF">K17O22.2</name>
</gene>
<sequence>MAASSSSTGLPPQHQVFINFRGEDLRLGFVSHLVEALENDNIKVFIDNYADKGEPLETLLTKIHDSKIALAIFSGKYTESTWCLRELAMIKDCVEKGKLVAIPIFYKVDPSTVRGVRGQFGDAFRDLEERDVIKKKEWKQALKWIPGLIGITVHDKSPESEILNEIVKEVKKVLKKVSLEGSQKVVSVDPSQSIDTLSSVGGEKDKTFGIKQRLKELEEKLDLVKYKGTRVIGVVGMPGIGKTTLVKELYKTWQGKFSRYALIDQIRGKSNNFRLECLPTLLLEKLLPELNNPQLDSIEEPYKTHKGLLRERKVLVVLDDVSRREQIYALLGKYDLHSKHEWIKDGSRIIIATNDISSLKGLVHDTYVVRQLNHRDGLQLFRYHAFHYDQATPPKVDFMKLSDEFVHYARGHPLALKILGRELYEKNMKHWETKLIILAQSPTTYIGEVVQVSYDELSLAQKDAFLDIACFRSQDVDYVESLLVSSDPGSAEAIKALKNKFLIDTCDGRVEMHDLLYRFSRELDLKASTQGGSKQRRLWVRQDIINVQQKTMGAANVRGIFLDLSEVKVETSLDREHFKNMRNLRYLKLYNSHCPHECLTNNKINMPDGLELPLKEVRCLHWLKFPLEELPNDFDPINLVDLKLPYSEIERLWDGVKDTPVLKWVDLNHSSKLCSLSGLSKAQNLQRLNLEGCTSLESLRDVNLTSLKTLTLSNCSNFKEFPLIPENLKALYLDGTSISQLPDNVGNLKRLVLLNMKDCKVLETIPTCVSELKTLQKLVLSGCSKLKEFPEINKSSLKILLLDGTSIKTMPQLPSVQYLCLSRNDHLIYLPAGINQVSQLTRLDLKYCTKLTYVPELPPTLQYLDAHGCSSLKNVAKPLARIMSTVQNHYTFNFTNCGNLEQAAKEEITSYAQRKCQLLSDARKHYNEGSEALFSTCFPGCEVPSWFGHEAVGSLLQRKLLPHWHDKRLSGIALCAVVSFPDSQDQLSCFSVTCTFKIKAEDKSWVPFTCPVGIWTREGNKKDRIESDHVFIAYISSPHSIRCLEEKNSDKCNFSEASLEFTVTSDTSGIGVFKVLKCGLSLVYENDKNKNSSLEAKYDVPVEVSFQEPEHGIMEEERYINKRRSDDRRPKKKRKTKRDDIMIISTVTQTCVPSVNARIEDKVTG</sequence>
<feature type="chain" id="PRO_0000444576" description="Disease resistance protein RPS4B">
    <location>
        <begin position="1"/>
        <end position="1165"/>
    </location>
</feature>
<feature type="domain" description="TIR" evidence="2">
    <location>
        <begin position="12"/>
        <end position="174"/>
    </location>
</feature>
<feature type="domain" description="NB-ARC" evidence="1">
    <location>
        <begin position="211"/>
        <end position="474"/>
    </location>
</feature>
<feature type="repeat" description="LRR 1" evidence="1">
    <location>
        <begin position="592"/>
        <end position="613"/>
    </location>
</feature>
<feature type="repeat" description="LRR 2; degenerate" evidence="5">
    <location>
        <begin position="614"/>
        <end position="635"/>
    </location>
</feature>
<feature type="repeat" description="LRR 3" evidence="1">
    <location>
        <begin position="636"/>
        <end position="659"/>
    </location>
</feature>
<feature type="repeat" description="LRR 4" evidence="1">
    <location>
        <begin position="684"/>
        <end position="703"/>
    </location>
</feature>
<feature type="repeat" description="LRR 5" evidence="1">
    <location>
        <begin position="704"/>
        <end position="725"/>
    </location>
</feature>
<feature type="repeat" description="LRR 6" evidence="1">
    <location>
        <begin position="726"/>
        <end position="748"/>
    </location>
</feature>
<feature type="repeat" description="LRR 7" evidence="1">
    <location>
        <begin position="772"/>
        <end position="794"/>
    </location>
</feature>
<feature type="repeat" description="LRR 8" evidence="1">
    <location>
        <begin position="795"/>
        <end position="818"/>
    </location>
</feature>
<feature type="repeat" description="LRR 9; degenerate" evidence="5">
    <location>
        <begin position="819"/>
        <end position="836"/>
    </location>
</feature>
<feature type="repeat" description="LRR 10" evidence="1">
    <location>
        <begin position="837"/>
        <end position="863"/>
    </location>
</feature>
<feature type="active site" evidence="2">
    <location>
        <position position="86"/>
    </location>
</feature>
<organism>
    <name type="scientific">Arabidopsis thaliana</name>
    <name type="common">Mouse-ear cress</name>
    <dbReference type="NCBI Taxonomy" id="3702"/>
    <lineage>
        <taxon>Eukaryota</taxon>
        <taxon>Viridiplantae</taxon>
        <taxon>Streptophyta</taxon>
        <taxon>Embryophyta</taxon>
        <taxon>Tracheophyta</taxon>
        <taxon>Spermatophyta</taxon>
        <taxon>Magnoliopsida</taxon>
        <taxon>eudicotyledons</taxon>
        <taxon>Gunneridae</taxon>
        <taxon>Pentapetalae</taxon>
        <taxon>rosids</taxon>
        <taxon>malvids</taxon>
        <taxon>Brassicales</taxon>
        <taxon>Brassicaceae</taxon>
        <taxon>Camelineae</taxon>
        <taxon>Arabidopsis</taxon>
    </lineage>
</organism>
<dbReference type="EC" id="3.2.2.6" evidence="2"/>
<dbReference type="EMBL" id="AB019224">
    <property type="protein sequence ID" value="BAB09489.1"/>
    <property type="molecule type" value="Genomic_DNA"/>
</dbReference>
<dbReference type="EMBL" id="CP002688">
    <property type="protein sequence ID" value="AED95196.1"/>
    <property type="molecule type" value="Genomic_DNA"/>
</dbReference>
<dbReference type="EMBL" id="CP002688">
    <property type="protein sequence ID" value="ANM69267.1"/>
    <property type="molecule type" value="Genomic_DNA"/>
</dbReference>
<dbReference type="RefSeq" id="NP_001330960.1">
    <property type="nucleotide sequence ID" value="NM_001344584.1"/>
</dbReference>
<dbReference type="RefSeq" id="NP_199319.1">
    <property type="nucleotide sequence ID" value="NM_123874.3"/>
</dbReference>
<dbReference type="SMR" id="Q9FHF0"/>
<dbReference type="FunCoup" id="Q9FHF0">
    <property type="interactions" value="32"/>
</dbReference>
<dbReference type="STRING" id="3702.Q9FHF0"/>
<dbReference type="iPTMnet" id="Q9FHF0"/>
<dbReference type="PaxDb" id="3702-AT5G45060.1"/>
<dbReference type="ProteomicsDB" id="228251"/>
<dbReference type="EnsemblPlants" id="AT5G45060.1">
    <property type="protein sequence ID" value="AT5G45060.1"/>
    <property type="gene ID" value="AT5G45060"/>
</dbReference>
<dbReference type="EnsemblPlants" id="AT5G45060.2">
    <property type="protein sequence ID" value="AT5G45060.2"/>
    <property type="gene ID" value="AT5G45060"/>
</dbReference>
<dbReference type="GeneID" id="834537"/>
<dbReference type="Gramene" id="AT5G45060.1">
    <property type="protein sequence ID" value="AT5G45060.1"/>
    <property type="gene ID" value="AT5G45060"/>
</dbReference>
<dbReference type="Gramene" id="AT5G45060.2">
    <property type="protein sequence ID" value="AT5G45060.2"/>
    <property type="gene ID" value="AT5G45060"/>
</dbReference>
<dbReference type="KEGG" id="ath:AT5G45060"/>
<dbReference type="Araport" id="AT5G45060"/>
<dbReference type="TAIR" id="AT5G45060"/>
<dbReference type="eggNOG" id="ENOG502SI7S">
    <property type="taxonomic scope" value="Eukaryota"/>
</dbReference>
<dbReference type="HOGENOM" id="CLU_001561_0_3_1"/>
<dbReference type="InParanoid" id="Q9FHF0"/>
<dbReference type="OMA" id="PEHGIME"/>
<dbReference type="PhylomeDB" id="Q9FHF0"/>
<dbReference type="PRO" id="PR:Q9FHF0"/>
<dbReference type="Proteomes" id="UP000006548">
    <property type="component" value="Chromosome 5"/>
</dbReference>
<dbReference type="ExpressionAtlas" id="Q9FHF0">
    <property type="expression patterns" value="baseline and differential"/>
</dbReference>
<dbReference type="GO" id="GO:0005634">
    <property type="term" value="C:nucleus"/>
    <property type="evidence" value="ECO:0007669"/>
    <property type="project" value="UniProtKB-SubCell"/>
</dbReference>
<dbReference type="GO" id="GO:0043531">
    <property type="term" value="F:ADP binding"/>
    <property type="evidence" value="ECO:0007669"/>
    <property type="project" value="InterPro"/>
</dbReference>
<dbReference type="GO" id="GO:0005524">
    <property type="term" value="F:ATP binding"/>
    <property type="evidence" value="ECO:0007669"/>
    <property type="project" value="UniProtKB-KW"/>
</dbReference>
<dbReference type="GO" id="GO:0061809">
    <property type="term" value="F:NAD+ nucleosidase activity, cyclic ADP-ribose generating"/>
    <property type="evidence" value="ECO:0007669"/>
    <property type="project" value="UniProtKB-EC"/>
</dbReference>
<dbReference type="GO" id="GO:0042742">
    <property type="term" value="P:defense response to bacterium"/>
    <property type="evidence" value="ECO:0000315"/>
    <property type="project" value="UniProtKB"/>
</dbReference>
<dbReference type="GO" id="GO:0002758">
    <property type="term" value="P:innate immune response-activating signaling pathway"/>
    <property type="evidence" value="ECO:0000314"/>
    <property type="project" value="UniProtKB"/>
</dbReference>
<dbReference type="FunFam" id="1.10.8.430:FF:000002">
    <property type="entry name" value="Disease resistance protein (TIR-NBS-LRR class)"/>
    <property type="match status" value="1"/>
</dbReference>
<dbReference type="FunFam" id="3.40.50.10140:FF:000007">
    <property type="entry name" value="Disease resistance protein (TIR-NBS-LRR class)"/>
    <property type="match status" value="1"/>
</dbReference>
<dbReference type="FunFam" id="3.40.50.300:FF:001862">
    <property type="entry name" value="Disease resistance protein RPS4"/>
    <property type="match status" value="1"/>
</dbReference>
<dbReference type="FunFam" id="3.80.10.10:FF:000386">
    <property type="entry name" value="Disease resistance protein RPS4"/>
    <property type="match status" value="1"/>
</dbReference>
<dbReference type="FunFam" id="3.80.10.10:FF:000568">
    <property type="entry name" value="Disease resistance protein RPS4"/>
    <property type="match status" value="1"/>
</dbReference>
<dbReference type="Gene3D" id="1.10.8.430">
    <property type="entry name" value="Helical domain of apoptotic protease-activating factors"/>
    <property type="match status" value="1"/>
</dbReference>
<dbReference type="Gene3D" id="3.40.50.300">
    <property type="entry name" value="P-loop containing nucleotide triphosphate hydrolases"/>
    <property type="match status" value="1"/>
</dbReference>
<dbReference type="Gene3D" id="3.80.10.10">
    <property type="entry name" value="Ribonuclease Inhibitor"/>
    <property type="match status" value="2"/>
</dbReference>
<dbReference type="Gene3D" id="3.40.50.10140">
    <property type="entry name" value="Toll/interleukin-1 receptor homology (TIR) domain"/>
    <property type="match status" value="1"/>
</dbReference>
<dbReference type="InterPro" id="IPR042197">
    <property type="entry name" value="Apaf_helical"/>
</dbReference>
<dbReference type="InterPro" id="IPR045344">
    <property type="entry name" value="C-JID"/>
</dbReference>
<dbReference type="InterPro" id="IPR044974">
    <property type="entry name" value="Disease_R_plants"/>
</dbReference>
<dbReference type="InterPro" id="IPR011713">
    <property type="entry name" value="Leu-rich_rpt_3"/>
</dbReference>
<dbReference type="InterPro" id="IPR032675">
    <property type="entry name" value="LRR_dom_sf"/>
</dbReference>
<dbReference type="InterPro" id="IPR002182">
    <property type="entry name" value="NB-ARC"/>
</dbReference>
<dbReference type="InterPro" id="IPR027417">
    <property type="entry name" value="P-loop_NTPase"/>
</dbReference>
<dbReference type="InterPro" id="IPR000157">
    <property type="entry name" value="TIR_dom"/>
</dbReference>
<dbReference type="InterPro" id="IPR035897">
    <property type="entry name" value="Toll_tir_struct_dom_sf"/>
</dbReference>
<dbReference type="PANTHER" id="PTHR11017:SF277">
    <property type="entry name" value="DISEASE RESISTANCE PROTEIN RPS4-RELATED"/>
    <property type="match status" value="1"/>
</dbReference>
<dbReference type="PANTHER" id="PTHR11017">
    <property type="entry name" value="LEUCINE-RICH REPEAT-CONTAINING PROTEIN"/>
    <property type="match status" value="1"/>
</dbReference>
<dbReference type="Pfam" id="PF20160">
    <property type="entry name" value="C-JID"/>
    <property type="match status" value="1"/>
</dbReference>
<dbReference type="Pfam" id="PF23286">
    <property type="entry name" value="LRR_13"/>
    <property type="match status" value="1"/>
</dbReference>
<dbReference type="Pfam" id="PF07725">
    <property type="entry name" value="LRR_3"/>
    <property type="match status" value="1"/>
</dbReference>
<dbReference type="Pfam" id="PF00931">
    <property type="entry name" value="NB-ARC"/>
    <property type="match status" value="1"/>
</dbReference>
<dbReference type="Pfam" id="PF01582">
    <property type="entry name" value="TIR"/>
    <property type="match status" value="1"/>
</dbReference>
<dbReference type="Pfam" id="PF23282">
    <property type="entry name" value="WHD_ROQ1"/>
    <property type="match status" value="1"/>
</dbReference>
<dbReference type="PRINTS" id="PR00364">
    <property type="entry name" value="DISEASERSIST"/>
</dbReference>
<dbReference type="SMART" id="SM00255">
    <property type="entry name" value="TIR"/>
    <property type="match status" value="1"/>
</dbReference>
<dbReference type="SUPFAM" id="SSF52058">
    <property type="entry name" value="L domain-like"/>
    <property type="match status" value="1"/>
</dbReference>
<dbReference type="SUPFAM" id="SSF52540">
    <property type="entry name" value="P-loop containing nucleoside triphosphate hydrolases"/>
    <property type="match status" value="1"/>
</dbReference>
<dbReference type="SUPFAM" id="SSF52200">
    <property type="entry name" value="Toll/Interleukin receptor TIR domain"/>
    <property type="match status" value="1"/>
</dbReference>
<dbReference type="PROSITE" id="PS50104">
    <property type="entry name" value="TIR"/>
    <property type="match status" value="1"/>
</dbReference>
<proteinExistence type="evidence at protein level"/>
<comment type="function">
    <text evidence="3">Disease resistance (R) protein that specifically recognizes the AvrRps4 type III effector avirulence protein from P.syringae. Heterodimerization with RRS1B is required to form a functional complex to recognize AvrRps4 and to mediate the hypersensitive response.</text>
</comment>
<comment type="catalytic activity">
    <reaction evidence="2">
        <text>NAD(+) + H2O = ADP-D-ribose + nicotinamide + H(+)</text>
        <dbReference type="Rhea" id="RHEA:16301"/>
        <dbReference type="ChEBI" id="CHEBI:15377"/>
        <dbReference type="ChEBI" id="CHEBI:15378"/>
        <dbReference type="ChEBI" id="CHEBI:17154"/>
        <dbReference type="ChEBI" id="CHEBI:57540"/>
        <dbReference type="ChEBI" id="CHEBI:57967"/>
        <dbReference type="EC" id="3.2.2.6"/>
    </reaction>
    <physiologicalReaction direction="left-to-right" evidence="2">
        <dbReference type="Rhea" id="RHEA:16302"/>
    </physiologicalReaction>
</comment>
<comment type="subunit">
    <text evidence="3">Interacts with RRS1B. RPS4B-RRS1B heterodimer interacts with the bacterial effectors AvrRps4 and PopP2.</text>
</comment>
<comment type="subcellular location">
    <subcellularLocation>
        <location evidence="5">Nucleus</location>
    </subcellularLocation>
</comment>
<comment type="domain">
    <text evidence="3">The TIR domain is a signaling domain involved in cell death induction. It is involved in heterodimerization of RPS4B with RRS1B, but other domains also contribute to the interaction.</text>
</comment>
<comment type="domain">
    <text evidence="2">The TIR domain mediates NAD(+) hydrolase (NADase) activity. Self-association of TIR domains is required for NADase activity.</text>
</comment>
<comment type="similarity">
    <text evidence="5">Belongs to the disease resistance TIR-NB-LRR family.</text>
</comment>
<comment type="online information" name="NIB-LRRS">
    <link uri="http://niblrrs.ucdavis.edu"/>
    <text>Functional and comparative genomics of disease resistance gene homologs</text>
</comment>
<protein>
    <recommendedName>
        <fullName evidence="4">Disease resistance protein RPS4B</fullName>
        <ecNumber evidence="2">3.2.2.6</ecNumber>
    </recommendedName>
</protein>
<keyword id="KW-0067">ATP-binding</keyword>
<keyword id="KW-0378">Hydrolase</keyword>
<keyword id="KW-0433">Leucine-rich repeat</keyword>
<keyword id="KW-0520">NAD</keyword>
<keyword id="KW-0547">Nucleotide-binding</keyword>
<keyword id="KW-0539">Nucleus</keyword>
<keyword id="KW-0611">Plant defense</keyword>
<keyword id="KW-1185">Reference proteome</keyword>
<keyword id="KW-0677">Repeat</keyword>
<evidence type="ECO:0000255" key="1"/>
<evidence type="ECO:0000255" key="2">
    <source>
        <dbReference type="PROSITE-ProRule" id="PRU00204"/>
    </source>
</evidence>
<evidence type="ECO:0000269" key="3">
    <source>
    </source>
</evidence>
<evidence type="ECO:0000303" key="4">
    <source>
    </source>
</evidence>
<evidence type="ECO:0000305" key="5"/>
<evidence type="ECO:0000312" key="6">
    <source>
        <dbReference type="Araport" id="AT5G45060"/>
    </source>
</evidence>
<evidence type="ECO:0000312" key="7">
    <source>
        <dbReference type="EMBL" id="BAB09489.1"/>
    </source>
</evidence>
<accession>Q9FHF0</accession>